<sequence>MRLVILDNYDLASEWAAKYICNRIIQFRPGQDRYFTLGLPTGSTPLGCYKKLIEYHKNGDLSFKYVKTFNMDEYVGLPRNHPESYHSYMWNNFFKHIDIDPNNAHILDGNATDLQAECDAFEKKIKEAGGIDLFVGGIGPDGHIAFNEPGSSLVSRTRLKTLAMDTILANAKYFDGDLSKVPTMALTVGVGTVMDAREVMILITGAHKAFALYKAIEEGVNHMWTVSAFQQHPRTIFVCDEDATLELRVKTVKYFKGLMHVHNKLVDPLYSMKEGN</sequence>
<reference key="1">
    <citation type="submission" date="2006-06" db="EMBL/GenBank/DDBJ databases">
        <authorList>
            <consortium name="NIH - Mammalian Gene Collection (MGC) project"/>
        </authorList>
    </citation>
    <scope>NUCLEOTIDE SEQUENCE [LARGE SCALE MRNA]</scope>
    <source>
        <strain>Hereford</strain>
        <tissue>Fetal muscle</tissue>
    </source>
</reference>
<proteinExistence type="evidence at transcript level"/>
<feature type="chain" id="PRO_0000343204" description="Glucosamine-6-phosphate deaminase 2">
    <location>
        <begin position="1"/>
        <end position="276"/>
    </location>
</feature>
<feature type="coiled-coil region" evidence="4">
    <location>
        <begin position="106"/>
        <end position="130"/>
    </location>
</feature>
<feature type="active site" description="Proton acceptor; for enolization step" evidence="1">
    <location>
        <position position="72"/>
    </location>
</feature>
<feature type="active site" description="For ring-opening step" evidence="1">
    <location>
        <position position="141"/>
    </location>
</feature>
<feature type="active site" description="Proton acceptor; for ring-opening step" evidence="1">
    <location>
        <position position="143"/>
    </location>
</feature>
<feature type="active site" description="For ring-opening step" evidence="1">
    <location>
        <position position="148"/>
    </location>
</feature>
<feature type="modified residue" description="Phosphothreonine" evidence="2">
    <location>
        <position position="161"/>
    </location>
</feature>
<evidence type="ECO:0000250" key="1"/>
<evidence type="ECO:0000250" key="2">
    <source>
        <dbReference type="UniProtKB" id="O88958"/>
    </source>
</evidence>
<evidence type="ECO:0000250" key="3">
    <source>
        <dbReference type="UniProtKB" id="Q8TDQ7"/>
    </source>
</evidence>
<evidence type="ECO:0000255" key="4"/>
<evidence type="ECO:0000305" key="5"/>
<evidence type="ECO:0000312" key="6">
    <source>
        <dbReference type="Proteomes" id="UP000009136"/>
    </source>
</evidence>
<keyword id="KW-0119">Carbohydrate metabolism</keyword>
<keyword id="KW-0175">Coiled coil</keyword>
<keyword id="KW-0963">Cytoplasm</keyword>
<keyword id="KW-0378">Hydrolase</keyword>
<keyword id="KW-0413">Isomerase</keyword>
<keyword id="KW-0597">Phosphoprotein</keyword>
<keyword id="KW-1185">Reference proteome</keyword>
<gene>
    <name evidence="3" type="primary">GNPDA2</name>
</gene>
<accession>Q17QL1</accession>
<protein>
    <recommendedName>
        <fullName evidence="3">Glucosamine-6-phosphate deaminase 2</fullName>
        <shortName>GlcN6P deaminase 2</shortName>
        <ecNumber evidence="3">3.5.99.6</ecNumber>
    </recommendedName>
    <alternativeName>
        <fullName evidence="3">Glucosamine-6-phosphate isomerase 2</fullName>
    </alternativeName>
</protein>
<comment type="function">
    <text evidence="3">Catalyzes the reversible conversion of alpha-D-glucosamine 6-phosphate (GlcN-6P) into beta-D-fructose 6-phosphate (Fru-6P) and ammonium ion, a regulatory reaction step in de novo uridine diphosphate-N-acetyl-alpha-D-glucosamine (UDP-GlcNAc) biosynthesis via hexosamine pathway. Deamination is coupled to aldo-keto isomerization mediating the metabolic flux from UDP-GlcNAc toward Fru-6P. At high ammonium level can drive amination and isomerization of Fru-6P toward hexosamines and UDP-GlcNAc synthesis. Has a role in fine tuning the metabolic fluctuations of cytosolic UDP-GlcNAc and their effects on hyaluronan synthesis that occur during tissue remodeling.</text>
</comment>
<comment type="catalytic activity">
    <reaction evidence="3">
        <text>alpha-D-glucosamine 6-phosphate + H2O = beta-D-fructose 6-phosphate + NH4(+)</text>
        <dbReference type="Rhea" id="RHEA:12172"/>
        <dbReference type="ChEBI" id="CHEBI:15377"/>
        <dbReference type="ChEBI" id="CHEBI:28938"/>
        <dbReference type="ChEBI" id="CHEBI:57634"/>
        <dbReference type="ChEBI" id="CHEBI:75989"/>
        <dbReference type="EC" id="3.5.99.6"/>
    </reaction>
    <physiologicalReaction direction="left-to-right" evidence="3">
        <dbReference type="Rhea" id="RHEA:12173"/>
    </physiologicalReaction>
    <physiologicalReaction direction="right-to-left" evidence="3">
        <dbReference type="Rhea" id="RHEA:12174"/>
    </physiologicalReaction>
</comment>
<comment type="activity regulation">
    <text evidence="3">Allosterically activated by N-acetylglucosamine-6-phosphate (GlcNAc6P).</text>
</comment>
<comment type="pathway">
    <text evidence="3">Nucleotide-sugar biosynthesis; UDP-N-acetyl-alpha-D-glucosamine biosynthesis; alpha-D-glucosamine 6-phosphate from D-fructose 6-phosphate: step 1/1.</text>
</comment>
<comment type="subunit">
    <text evidence="1">Homohexamer.</text>
</comment>
<comment type="subcellular location">
    <subcellularLocation>
        <location evidence="1">Cytoplasm</location>
    </subcellularLocation>
</comment>
<comment type="similarity">
    <text evidence="5">Belongs to the glucosamine/galactosamine-6-phosphate isomerase family.</text>
</comment>
<dbReference type="EC" id="3.5.99.6" evidence="3"/>
<dbReference type="EMBL" id="BC118295">
    <property type="protein sequence ID" value="AAI18296.1"/>
    <property type="molecule type" value="mRNA"/>
</dbReference>
<dbReference type="RefSeq" id="NP_001068824.1">
    <property type="nucleotide sequence ID" value="NM_001075356.1"/>
</dbReference>
<dbReference type="SMR" id="Q17QL1"/>
<dbReference type="FunCoup" id="Q17QL1">
    <property type="interactions" value="1950"/>
</dbReference>
<dbReference type="STRING" id="9913.ENSBTAP00000000357"/>
<dbReference type="PaxDb" id="9913-ENSBTAP00000000357"/>
<dbReference type="GeneID" id="508383"/>
<dbReference type="KEGG" id="bta:508383"/>
<dbReference type="CTD" id="132789"/>
<dbReference type="eggNOG" id="KOG3148">
    <property type="taxonomic scope" value="Eukaryota"/>
</dbReference>
<dbReference type="HOGENOM" id="CLU_049611_0_1_1"/>
<dbReference type="InParanoid" id="Q17QL1"/>
<dbReference type="OrthoDB" id="7663298at2759"/>
<dbReference type="TreeFam" id="TF300841"/>
<dbReference type="UniPathway" id="UPA00113">
    <property type="reaction ID" value="UER00528"/>
</dbReference>
<dbReference type="Proteomes" id="UP000009136">
    <property type="component" value="Unplaced"/>
</dbReference>
<dbReference type="GO" id="GO:0005737">
    <property type="term" value="C:cytoplasm"/>
    <property type="evidence" value="ECO:0000318"/>
    <property type="project" value="GO_Central"/>
</dbReference>
<dbReference type="GO" id="GO:0004342">
    <property type="term" value="F:glucosamine-6-phosphate deaminase activity"/>
    <property type="evidence" value="ECO:0000250"/>
    <property type="project" value="UniProtKB"/>
</dbReference>
<dbReference type="GO" id="GO:0042802">
    <property type="term" value="F:identical protein binding"/>
    <property type="evidence" value="ECO:0000318"/>
    <property type="project" value="GO_Central"/>
</dbReference>
<dbReference type="GO" id="GO:0016853">
    <property type="term" value="F:isomerase activity"/>
    <property type="evidence" value="ECO:0007669"/>
    <property type="project" value="UniProtKB-KW"/>
</dbReference>
<dbReference type="GO" id="GO:0005975">
    <property type="term" value="P:carbohydrate metabolic process"/>
    <property type="evidence" value="ECO:0007669"/>
    <property type="project" value="InterPro"/>
</dbReference>
<dbReference type="GO" id="GO:0006043">
    <property type="term" value="P:glucosamine catabolic process"/>
    <property type="evidence" value="ECO:0000318"/>
    <property type="project" value="GO_Central"/>
</dbReference>
<dbReference type="GO" id="GO:0006046">
    <property type="term" value="P:N-acetylglucosamine catabolic process"/>
    <property type="evidence" value="ECO:0000318"/>
    <property type="project" value="GO_Central"/>
</dbReference>
<dbReference type="GO" id="GO:0019262">
    <property type="term" value="P:N-acetylneuraminate catabolic process"/>
    <property type="evidence" value="ECO:0000318"/>
    <property type="project" value="GO_Central"/>
</dbReference>
<dbReference type="GO" id="GO:0006048">
    <property type="term" value="P:UDP-N-acetylglucosamine biosynthetic process"/>
    <property type="evidence" value="ECO:0000250"/>
    <property type="project" value="UniProtKB"/>
</dbReference>
<dbReference type="CDD" id="cd01399">
    <property type="entry name" value="GlcN6P_deaminase"/>
    <property type="match status" value="1"/>
</dbReference>
<dbReference type="FunFam" id="3.40.50.1360:FF:000004">
    <property type="entry name" value="Glucosamine-6-phosphate isomerase"/>
    <property type="match status" value="1"/>
</dbReference>
<dbReference type="Gene3D" id="3.40.50.1360">
    <property type="match status" value="1"/>
</dbReference>
<dbReference type="HAMAP" id="MF_01241">
    <property type="entry name" value="GlcN6P_deamin"/>
    <property type="match status" value="1"/>
</dbReference>
<dbReference type="InterPro" id="IPR006148">
    <property type="entry name" value="Glc/Gal-6P_isomerase"/>
</dbReference>
<dbReference type="InterPro" id="IPR004547">
    <property type="entry name" value="Glucosamine6P_isomerase"/>
</dbReference>
<dbReference type="InterPro" id="IPR018321">
    <property type="entry name" value="Glucosamine6P_isomerase_CS"/>
</dbReference>
<dbReference type="InterPro" id="IPR037171">
    <property type="entry name" value="NagB/RpiA_transferase-like"/>
</dbReference>
<dbReference type="NCBIfam" id="TIGR00502">
    <property type="entry name" value="nagB"/>
    <property type="match status" value="1"/>
</dbReference>
<dbReference type="PANTHER" id="PTHR11280">
    <property type="entry name" value="GLUCOSAMINE-6-PHOSPHATE ISOMERASE"/>
    <property type="match status" value="1"/>
</dbReference>
<dbReference type="PANTHER" id="PTHR11280:SF9">
    <property type="entry name" value="GLUCOSAMINE-6-PHOSPHATE ISOMERASE 2"/>
    <property type="match status" value="1"/>
</dbReference>
<dbReference type="Pfam" id="PF01182">
    <property type="entry name" value="Glucosamine_iso"/>
    <property type="match status" value="1"/>
</dbReference>
<dbReference type="SUPFAM" id="SSF100950">
    <property type="entry name" value="NagB/RpiA/CoA transferase-like"/>
    <property type="match status" value="1"/>
</dbReference>
<dbReference type="PROSITE" id="PS01161">
    <property type="entry name" value="GLC_GALNAC_ISOMERASE"/>
    <property type="match status" value="1"/>
</dbReference>
<name>GNPI2_BOVIN</name>
<organism evidence="6">
    <name type="scientific">Bos taurus</name>
    <name type="common">Bovine</name>
    <dbReference type="NCBI Taxonomy" id="9913"/>
    <lineage>
        <taxon>Eukaryota</taxon>
        <taxon>Metazoa</taxon>
        <taxon>Chordata</taxon>
        <taxon>Craniata</taxon>
        <taxon>Vertebrata</taxon>
        <taxon>Euteleostomi</taxon>
        <taxon>Mammalia</taxon>
        <taxon>Eutheria</taxon>
        <taxon>Laurasiatheria</taxon>
        <taxon>Artiodactyla</taxon>
        <taxon>Ruminantia</taxon>
        <taxon>Pecora</taxon>
        <taxon>Bovidae</taxon>
        <taxon>Bovinae</taxon>
        <taxon>Bos</taxon>
    </lineage>
</organism>